<organism>
    <name type="scientific">Strongylocentrotus purpuratus</name>
    <name type="common">Purple sea urchin</name>
    <dbReference type="NCBI Taxonomy" id="7668"/>
    <lineage>
        <taxon>Eukaryota</taxon>
        <taxon>Metazoa</taxon>
        <taxon>Echinodermata</taxon>
        <taxon>Eleutherozoa</taxon>
        <taxon>Echinozoa</taxon>
        <taxon>Echinoidea</taxon>
        <taxon>Euechinoidea</taxon>
        <taxon>Echinacea</taxon>
        <taxon>Camarodonta</taxon>
        <taxon>Echinidea</taxon>
        <taxon>Strongylocentrotidae</taxon>
        <taxon>Strongylocentrotus</taxon>
    </lineage>
</organism>
<sequence length="211" mass="22169">MAAEQKKVAKKPRAKPAHPSSSEMVLAAITALKERGGSSAQAIRKYIEKNYTVDIKKQAIFIKRALITGVEKGTLVQVKGKGASGSFKLGKKKEGKSDAQKAPDAAKKAKLAAKKKEAKEKKAARSKAKKEKLAAKKASKKTTKKVKKPAAKKAKKPAAKKAAKKPAAKKPAAKKAAAKPAPAKKAAKKPAAKKAAKKVAKKPAAKKAAKK</sequence>
<feature type="chain" id="PRO_0000195944" description="Histone H1-beta, late embryonic">
    <location>
        <begin position="1"/>
        <end position="211"/>
    </location>
</feature>
<feature type="domain" description="H15" evidence="1">
    <location>
        <begin position="17"/>
        <end position="91"/>
    </location>
</feature>
<feature type="region of interest" description="Disordered" evidence="2">
    <location>
        <begin position="1"/>
        <end position="22"/>
    </location>
</feature>
<feature type="region of interest" description="Disordered" evidence="2">
    <location>
        <begin position="81"/>
        <end position="211"/>
    </location>
</feature>
<feature type="compositionally biased region" description="Basic and acidic residues" evidence="2">
    <location>
        <begin position="95"/>
        <end position="107"/>
    </location>
</feature>
<feature type="compositionally biased region" description="Basic and acidic residues" evidence="2">
    <location>
        <begin position="114"/>
        <end position="123"/>
    </location>
</feature>
<feature type="compositionally biased region" description="Basic residues" evidence="2">
    <location>
        <begin position="124"/>
        <end position="177"/>
    </location>
</feature>
<feature type="compositionally biased region" description="Basic residues" evidence="2">
    <location>
        <begin position="185"/>
        <end position="211"/>
    </location>
</feature>
<proteinExistence type="inferred from homology"/>
<accession>P15869</accession>
<comment type="function">
    <text>Histones H1 are necessary for the condensation of nucleosome chains into higher-order structures.</text>
</comment>
<comment type="subcellular location">
    <subcellularLocation>
        <location>Nucleus</location>
    </subcellularLocation>
    <subcellularLocation>
        <location>Chromosome</location>
    </subcellularLocation>
</comment>
<comment type="similarity">
    <text evidence="1">Belongs to the histone H1/H5 family.</text>
</comment>
<name>H1B_STRPU</name>
<keyword id="KW-0158">Chromosome</keyword>
<keyword id="KW-0238">DNA-binding</keyword>
<keyword id="KW-0539">Nucleus</keyword>
<keyword id="KW-1185">Reference proteome</keyword>
<protein>
    <recommendedName>
        <fullName>Histone H1-beta, late embryonic</fullName>
    </recommendedName>
</protein>
<evidence type="ECO:0000255" key="1">
    <source>
        <dbReference type="PROSITE-ProRule" id="PRU00837"/>
    </source>
</evidence>
<evidence type="ECO:0000256" key="2">
    <source>
        <dbReference type="SAM" id="MobiDB-lite"/>
    </source>
</evidence>
<reference key="1">
    <citation type="journal article" date="1988" name="Mol. Cell. Biol.">
        <title>Characterization of the structure and transcriptional patterns of the gene encoding the late histone subtype H1-beta of the sea urchin Strongylocentrotus purpuratus.</title>
        <authorList>
            <person name="Lai Z.-C."/>
            <person name="Childs G."/>
        </authorList>
    </citation>
    <scope>NUCLEOTIDE SEQUENCE [GENOMIC DNA]</scope>
</reference>
<dbReference type="EMBL" id="M20314">
    <property type="protein sequence ID" value="AAA30052.1"/>
    <property type="molecule type" value="Genomic_DNA"/>
</dbReference>
<dbReference type="PIR" id="A28100">
    <property type="entry name" value="A28100"/>
</dbReference>
<dbReference type="RefSeq" id="NP_999723.1">
    <property type="nucleotide sequence ID" value="NM_214558.1"/>
</dbReference>
<dbReference type="SMR" id="P15869"/>
<dbReference type="EnsemblMetazoa" id="NM_214558">
    <property type="protein sequence ID" value="NP_999723"/>
    <property type="gene ID" value="LOC373354"/>
</dbReference>
<dbReference type="GeneID" id="373354"/>
<dbReference type="KEGG" id="spu:373354"/>
<dbReference type="eggNOG" id="KOG4012">
    <property type="taxonomic scope" value="Eukaryota"/>
</dbReference>
<dbReference type="HOGENOM" id="CLU_052897_1_2_1"/>
<dbReference type="InParanoid" id="P15869"/>
<dbReference type="OMA" id="QTCHASM"/>
<dbReference type="OrthoDB" id="10070184at2759"/>
<dbReference type="PhylomeDB" id="P15869"/>
<dbReference type="Proteomes" id="UP000007110">
    <property type="component" value="Unassembled WGS sequence"/>
</dbReference>
<dbReference type="GO" id="GO:0000786">
    <property type="term" value="C:nucleosome"/>
    <property type="evidence" value="ECO:0007669"/>
    <property type="project" value="InterPro"/>
</dbReference>
<dbReference type="GO" id="GO:0005634">
    <property type="term" value="C:nucleus"/>
    <property type="evidence" value="ECO:0000318"/>
    <property type="project" value="GO_Central"/>
</dbReference>
<dbReference type="GO" id="GO:0003690">
    <property type="term" value="F:double-stranded DNA binding"/>
    <property type="evidence" value="ECO:0000318"/>
    <property type="project" value="GO_Central"/>
</dbReference>
<dbReference type="GO" id="GO:0031492">
    <property type="term" value="F:nucleosomal DNA binding"/>
    <property type="evidence" value="ECO:0000318"/>
    <property type="project" value="GO_Central"/>
</dbReference>
<dbReference type="GO" id="GO:0030527">
    <property type="term" value="F:structural constituent of chromatin"/>
    <property type="evidence" value="ECO:0007669"/>
    <property type="project" value="InterPro"/>
</dbReference>
<dbReference type="GO" id="GO:0030261">
    <property type="term" value="P:chromosome condensation"/>
    <property type="evidence" value="ECO:0000318"/>
    <property type="project" value="GO_Central"/>
</dbReference>
<dbReference type="GO" id="GO:0045910">
    <property type="term" value="P:negative regulation of DNA recombination"/>
    <property type="evidence" value="ECO:0000318"/>
    <property type="project" value="GO_Central"/>
</dbReference>
<dbReference type="GO" id="GO:0006334">
    <property type="term" value="P:nucleosome assembly"/>
    <property type="evidence" value="ECO:0007669"/>
    <property type="project" value="InterPro"/>
</dbReference>
<dbReference type="CDD" id="cd00073">
    <property type="entry name" value="H15"/>
    <property type="match status" value="1"/>
</dbReference>
<dbReference type="FunFam" id="1.10.10.10:FF:000140">
    <property type="entry name" value="Histone H1.0"/>
    <property type="match status" value="1"/>
</dbReference>
<dbReference type="Gene3D" id="1.10.10.10">
    <property type="entry name" value="Winged helix-like DNA-binding domain superfamily/Winged helix DNA-binding domain"/>
    <property type="match status" value="1"/>
</dbReference>
<dbReference type="InterPro" id="IPR005819">
    <property type="entry name" value="H1/H5"/>
</dbReference>
<dbReference type="InterPro" id="IPR005818">
    <property type="entry name" value="Histone_H1/H5_H15"/>
</dbReference>
<dbReference type="InterPro" id="IPR036388">
    <property type="entry name" value="WH-like_DNA-bd_sf"/>
</dbReference>
<dbReference type="InterPro" id="IPR036390">
    <property type="entry name" value="WH_DNA-bd_sf"/>
</dbReference>
<dbReference type="PANTHER" id="PTHR11467:SF20">
    <property type="entry name" value="H15 DOMAIN-CONTAINING PROTEIN-RELATED"/>
    <property type="match status" value="1"/>
</dbReference>
<dbReference type="PANTHER" id="PTHR11467">
    <property type="entry name" value="HISTONE H1"/>
    <property type="match status" value="1"/>
</dbReference>
<dbReference type="Pfam" id="PF00538">
    <property type="entry name" value="Linker_histone"/>
    <property type="match status" value="1"/>
</dbReference>
<dbReference type="PRINTS" id="PR00624">
    <property type="entry name" value="HISTONEH5"/>
</dbReference>
<dbReference type="SMART" id="SM00526">
    <property type="entry name" value="H15"/>
    <property type="match status" value="1"/>
</dbReference>
<dbReference type="SUPFAM" id="SSF46785">
    <property type="entry name" value="Winged helix' DNA-binding domain"/>
    <property type="match status" value="1"/>
</dbReference>
<dbReference type="PROSITE" id="PS51504">
    <property type="entry name" value="H15"/>
    <property type="match status" value="1"/>
</dbReference>